<accession>A5UF36</accession>
<feature type="chain" id="PRO_1000064716" description="Ribosome maturation factor RimP">
    <location>
        <begin position="1"/>
        <end position="151"/>
    </location>
</feature>
<comment type="function">
    <text evidence="1">Required for maturation of 30S ribosomal subunits.</text>
</comment>
<comment type="subcellular location">
    <subcellularLocation>
        <location evidence="1">Cytoplasm</location>
    </subcellularLocation>
</comment>
<comment type="similarity">
    <text evidence="1">Belongs to the RimP family.</text>
</comment>
<reference key="1">
    <citation type="journal article" date="2007" name="Genome Biol.">
        <title>Characterization and modeling of the Haemophilus influenzae core and supragenomes based on the complete genomic sequences of Rd and 12 clinical nontypeable strains.</title>
        <authorList>
            <person name="Hogg J.S."/>
            <person name="Hu F.Z."/>
            <person name="Janto B."/>
            <person name="Boissy R."/>
            <person name="Hayes J."/>
            <person name="Keefe R."/>
            <person name="Post J.C."/>
            <person name="Ehrlich G.D."/>
        </authorList>
    </citation>
    <scope>NUCLEOTIDE SEQUENCE [LARGE SCALE GENOMIC DNA]</scope>
    <source>
        <strain>PittGG</strain>
    </source>
</reference>
<evidence type="ECO:0000255" key="1">
    <source>
        <dbReference type="HAMAP-Rule" id="MF_01077"/>
    </source>
</evidence>
<gene>
    <name evidence="1" type="primary">rimP</name>
    <name type="ordered locus">CGSHiGG_01570</name>
</gene>
<keyword id="KW-0963">Cytoplasm</keyword>
<keyword id="KW-0690">Ribosome biogenesis</keyword>
<protein>
    <recommendedName>
        <fullName evidence="1">Ribosome maturation factor RimP</fullName>
    </recommendedName>
</protein>
<sequence length="151" mass="17267">MATLEQNLQEMLQDAVEDLGCELWGIECQRVGRFMTVRLFIDKDGGVTVDDCADVSRQVSAILDVEDPIADKYNLEVSSPGLDRPLFTLPQFERYIGQDIAVHLRIPVMERRKWQGKLERIEKDMITLIVDDQEQILVFGNIQKANVVAKF</sequence>
<name>RIMP_HAEIG</name>
<organism>
    <name type="scientific">Haemophilus influenzae (strain PittGG)</name>
    <dbReference type="NCBI Taxonomy" id="374931"/>
    <lineage>
        <taxon>Bacteria</taxon>
        <taxon>Pseudomonadati</taxon>
        <taxon>Pseudomonadota</taxon>
        <taxon>Gammaproteobacteria</taxon>
        <taxon>Pasteurellales</taxon>
        <taxon>Pasteurellaceae</taxon>
        <taxon>Haemophilus</taxon>
    </lineage>
</organism>
<proteinExistence type="inferred from homology"/>
<dbReference type="EMBL" id="CP000672">
    <property type="protein sequence ID" value="ABQ99391.1"/>
    <property type="molecule type" value="Genomic_DNA"/>
</dbReference>
<dbReference type="SMR" id="A5UF36"/>
<dbReference type="KEGG" id="hiq:CGSHiGG_01570"/>
<dbReference type="HOGENOM" id="CLU_070525_1_1_6"/>
<dbReference type="Proteomes" id="UP000001990">
    <property type="component" value="Chromosome"/>
</dbReference>
<dbReference type="GO" id="GO:0005829">
    <property type="term" value="C:cytosol"/>
    <property type="evidence" value="ECO:0007669"/>
    <property type="project" value="TreeGrafter"/>
</dbReference>
<dbReference type="GO" id="GO:0000028">
    <property type="term" value="P:ribosomal small subunit assembly"/>
    <property type="evidence" value="ECO:0007669"/>
    <property type="project" value="TreeGrafter"/>
</dbReference>
<dbReference type="GO" id="GO:0006412">
    <property type="term" value="P:translation"/>
    <property type="evidence" value="ECO:0007669"/>
    <property type="project" value="TreeGrafter"/>
</dbReference>
<dbReference type="CDD" id="cd01734">
    <property type="entry name" value="YlxS_C"/>
    <property type="match status" value="1"/>
</dbReference>
<dbReference type="FunFam" id="3.30.300.70:FF:000001">
    <property type="entry name" value="Ribosome maturation factor RimP"/>
    <property type="match status" value="1"/>
</dbReference>
<dbReference type="Gene3D" id="2.30.30.180">
    <property type="entry name" value="Ribosome maturation factor RimP, C-terminal domain"/>
    <property type="match status" value="1"/>
</dbReference>
<dbReference type="Gene3D" id="3.30.300.70">
    <property type="entry name" value="RimP-like superfamily, N-terminal"/>
    <property type="match status" value="1"/>
</dbReference>
<dbReference type="HAMAP" id="MF_01077">
    <property type="entry name" value="RimP"/>
    <property type="match status" value="1"/>
</dbReference>
<dbReference type="InterPro" id="IPR003728">
    <property type="entry name" value="Ribosome_maturation_RimP"/>
</dbReference>
<dbReference type="InterPro" id="IPR028998">
    <property type="entry name" value="RimP_C"/>
</dbReference>
<dbReference type="InterPro" id="IPR036847">
    <property type="entry name" value="RimP_C_sf"/>
</dbReference>
<dbReference type="InterPro" id="IPR028989">
    <property type="entry name" value="RimP_N"/>
</dbReference>
<dbReference type="InterPro" id="IPR035956">
    <property type="entry name" value="RimP_N_sf"/>
</dbReference>
<dbReference type="NCBIfam" id="NF000927">
    <property type="entry name" value="PRK00092.1-1"/>
    <property type="match status" value="1"/>
</dbReference>
<dbReference type="PANTHER" id="PTHR33867">
    <property type="entry name" value="RIBOSOME MATURATION FACTOR RIMP"/>
    <property type="match status" value="1"/>
</dbReference>
<dbReference type="PANTHER" id="PTHR33867:SF1">
    <property type="entry name" value="RIBOSOME MATURATION FACTOR RIMP"/>
    <property type="match status" value="1"/>
</dbReference>
<dbReference type="Pfam" id="PF17384">
    <property type="entry name" value="DUF150_C"/>
    <property type="match status" value="1"/>
</dbReference>
<dbReference type="Pfam" id="PF02576">
    <property type="entry name" value="RimP_N"/>
    <property type="match status" value="1"/>
</dbReference>
<dbReference type="SUPFAM" id="SSF74942">
    <property type="entry name" value="YhbC-like, C-terminal domain"/>
    <property type="match status" value="1"/>
</dbReference>
<dbReference type="SUPFAM" id="SSF75420">
    <property type="entry name" value="YhbC-like, N-terminal domain"/>
    <property type="match status" value="1"/>
</dbReference>